<keyword id="KW-0002">3D-structure</keyword>
<keyword id="KW-0007">Acetylation</keyword>
<keyword id="KW-0009">Actin-binding</keyword>
<keyword id="KW-0025">Alternative splicing</keyword>
<keyword id="KW-0966">Cell projection</keyword>
<keyword id="KW-0963">Cytoplasm</keyword>
<keyword id="KW-0206">Cytoskeleton</keyword>
<keyword id="KW-0903">Direct protein sequencing</keyword>
<keyword id="KW-0225">Disease variant</keyword>
<keyword id="KW-0991">Intellectual disability</keyword>
<keyword id="KW-0539">Nucleus</keyword>
<keyword id="KW-1267">Proteomics identification</keyword>
<keyword id="KW-1185">Reference proteome</keyword>
<dbReference type="EMBL" id="AF019888">
    <property type="protein sequence ID" value="AAB71548.1"/>
    <property type="molecule type" value="mRNA"/>
</dbReference>
<dbReference type="EMBL" id="AF006087">
    <property type="protein sequence ID" value="AAB64192.1"/>
    <property type="molecule type" value="mRNA"/>
</dbReference>
<dbReference type="EMBL" id="BX419672">
    <property type="status" value="NOT_ANNOTATED_CDS"/>
    <property type="molecule type" value="mRNA"/>
</dbReference>
<dbReference type="EMBL" id="AC022382">
    <property type="status" value="NOT_ANNOTATED_CDS"/>
    <property type="molecule type" value="Genomic_DNA"/>
</dbReference>
<dbReference type="EMBL" id="BC012596">
    <property type="protein sequence ID" value="AAH12596.3"/>
    <property type="status" value="ALT_INIT"/>
    <property type="molecule type" value="mRNA"/>
</dbReference>
<dbReference type="EMBL" id="BC025289">
    <property type="status" value="NOT_ANNOTATED_CDS"/>
    <property type="molecule type" value="mRNA"/>
</dbReference>
<dbReference type="CCDS" id="CCDS43047.1">
    <molecule id="P59998-1"/>
</dbReference>
<dbReference type="CCDS" id="CCDS46743.1">
    <molecule id="P59998-4"/>
</dbReference>
<dbReference type="CCDS" id="CCDS56238.1">
    <molecule id="P59998-3"/>
</dbReference>
<dbReference type="RefSeq" id="NP_001020130.1">
    <molecule id="P59998-4"/>
    <property type="nucleotide sequence ID" value="NM_001024959.3"/>
</dbReference>
<dbReference type="RefSeq" id="NP_001020131.1">
    <molecule id="P59998-4"/>
    <property type="nucleotide sequence ID" value="NM_001024960.3"/>
</dbReference>
<dbReference type="RefSeq" id="NP_001185709.1">
    <molecule id="P59998-3"/>
    <property type="nucleotide sequence ID" value="NM_001198780.3"/>
</dbReference>
<dbReference type="RefSeq" id="NP_005709.1">
    <molecule id="P59998-1"/>
    <property type="nucleotide sequence ID" value="NM_005718.5"/>
</dbReference>
<dbReference type="PDB" id="6UHC">
    <property type="method" value="EM"/>
    <property type="resolution" value="3.90 A"/>
    <property type="chains" value="F=1-168"/>
</dbReference>
<dbReference type="PDB" id="6YW6">
    <property type="method" value="EM"/>
    <property type="resolution" value="4.20 A"/>
    <property type="chains" value="F=1-168"/>
</dbReference>
<dbReference type="PDB" id="6YW7">
    <property type="method" value="EM"/>
    <property type="resolution" value="4.50 A"/>
    <property type="chains" value="F=1-168"/>
</dbReference>
<dbReference type="PDB" id="8P94">
    <property type="method" value="EM"/>
    <property type="resolution" value="3.30 A"/>
    <property type="chains" value="F=1-168"/>
</dbReference>
<dbReference type="PDBsum" id="6UHC"/>
<dbReference type="PDBsum" id="6YW6"/>
<dbReference type="PDBsum" id="6YW7"/>
<dbReference type="PDBsum" id="8P94"/>
<dbReference type="EMDB" id="EMD-10959"/>
<dbReference type="EMDB" id="EMD-10960"/>
<dbReference type="EMDB" id="EMD-17558"/>
<dbReference type="EMDB" id="EMD-20770"/>
<dbReference type="SMR" id="P59998"/>
<dbReference type="BioGRID" id="115400">
    <property type="interactions" value="175"/>
</dbReference>
<dbReference type="BioGRID" id="1529294">
    <property type="interactions" value="34"/>
</dbReference>
<dbReference type="ComplexPortal" id="CPX-2490">
    <property type="entry name" value="Actin-related protein 2/3 complex, ARPC1A-ACTR3B-ARPC5 variant"/>
</dbReference>
<dbReference type="ComplexPortal" id="CPX-2579">
    <property type="entry name" value="Actin-related protein 2/3 complex, ARPC1B-ACTR3-ARPC5 variant"/>
</dbReference>
<dbReference type="ComplexPortal" id="CPX-2580">
    <property type="entry name" value="Actin-related protein 2/3 complex, ARPC1B-ACTR3B-ARPC5L variant"/>
</dbReference>
<dbReference type="ComplexPortal" id="CPX-2583">
    <property type="entry name" value="Actin-related protein 2/3 complex, ARPC1B-ACTR3B-ARPC5 variant"/>
</dbReference>
<dbReference type="ComplexPortal" id="CPX-2586">
    <property type="entry name" value="Actin-related protein 2/3 complex, ARPC1A-ACTR3-ARPC5 variant"/>
</dbReference>
<dbReference type="ComplexPortal" id="CPX-2592">
    <property type="entry name" value="Actin-related protein 2/3 complex, ARPC1A-ACTR3-ARPC5L variant"/>
</dbReference>
<dbReference type="ComplexPortal" id="CPX-2663">
    <property type="entry name" value="Actin-related protein 2/3 complex, ARPC1B-ACTR3-ARPC5L variant"/>
</dbReference>
<dbReference type="ComplexPortal" id="CPX-2668">
    <property type="entry name" value="Actin-related protein 2/3 complex, ARPC1B-ACTR3B-ARPC5L variant"/>
</dbReference>
<dbReference type="CORUM" id="P59998"/>
<dbReference type="DIP" id="DIP-33188N"/>
<dbReference type="FunCoup" id="P59998">
    <property type="interactions" value="2953"/>
</dbReference>
<dbReference type="IntAct" id="P59998">
    <property type="interactions" value="81"/>
</dbReference>
<dbReference type="MINT" id="P59998"/>
<dbReference type="STRING" id="9606.ENSP00000388169"/>
<dbReference type="DrugBank" id="DB08236">
    <property type="generic name" value="(2S)-2-(3-bromophenyl)-3-(5-chloro-2-hydroxyphenyl)-1,3-thiazolidin-4-one"/>
</dbReference>
<dbReference type="DrugBank" id="DB08235">
    <property type="generic name" value="N-[2-(2-methyl-1H-indol-3-yl)ethyl]thiophene-2-carboxamide"/>
</dbReference>
<dbReference type="GlyGen" id="P59998">
    <property type="glycosylation" value="1 site, 1 O-linked glycan (1 site)"/>
</dbReference>
<dbReference type="iPTMnet" id="P59998"/>
<dbReference type="MetOSite" id="P59998"/>
<dbReference type="PhosphoSitePlus" id="P59998"/>
<dbReference type="SwissPalm" id="P59998"/>
<dbReference type="BioMuta" id="ARPC4"/>
<dbReference type="DMDM" id="38372625"/>
<dbReference type="jPOST" id="P59998"/>
<dbReference type="MassIVE" id="P59998"/>
<dbReference type="PaxDb" id="9606-ENSP00000388169"/>
<dbReference type="PeptideAtlas" id="P59998"/>
<dbReference type="ProteomicsDB" id="12011"/>
<dbReference type="ProteomicsDB" id="18209"/>
<dbReference type="ProteomicsDB" id="27989"/>
<dbReference type="ProteomicsDB" id="57176">
    <molecule id="P59998-1"/>
</dbReference>
<dbReference type="Pumba" id="P59998"/>
<dbReference type="TopDownProteomics" id="P59998-1">
    <molecule id="P59998-1"/>
</dbReference>
<dbReference type="Antibodypedia" id="34895">
    <property type="antibodies" value="207 antibodies from 29 providers"/>
</dbReference>
<dbReference type="DNASU" id="10093"/>
<dbReference type="Ensembl" id="ENST00000397261.8">
    <molecule id="P59998-1"/>
    <property type="protein sequence ID" value="ENSP00000380431.2"/>
    <property type="gene ID" value="ENSG00000241553.13"/>
</dbReference>
<dbReference type="Ensembl" id="ENST00000433034.1">
    <molecule id="P59998-3"/>
    <property type="protein sequence ID" value="ENSP00000388169.1"/>
    <property type="gene ID" value="ENSG00000241553.13"/>
</dbReference>
<dbReference type="Ensembl" id="ENST00000498623.6">
    <molecule id="P59998-4"/>
    <property type="protein sequence ID" value="ENSP00000432235.1"/>
    <property type="gene ID" value="ENSG00000241553.13"/>
</dbReference>
<dbReference type="GeneID" id="10093"/>
<dbReference type="KEGG" id="hsa:10093"/>
<dbReference type="MANE-Select" id="ENST00000397261.8">
    <property type="protein sequence ID" value="ENSP00000380431.2"/>
    <property type="RefSeq nucleotide sequence ID" value="NM_005718.5"/>
    <property type="RefSeq protein sequence ID" value="NP_005709.1"/>
</dbReference>
<dbReference type="UCSC" id="uc003bsz.3">
    <molecule id="P59998-1"/>
    <property type="organism name" value="human"/>
</dbReference>
<dbReference type="AGR" id="HGNC:707"/>
<dbReference type="CTD" id="10093"/>
<dbReference type="DisGeNET" id="10093"/>
<dbReference type="GeneCards" id="ARPC4"/>
<dbReference type="HGNC" id="HGNC:707">
    <property type="gene designation" value="ARPC4"/>
</dbReference>
<dbReference type="HPA" id="ENSG00000241553">
    <property type="expression patterns" value="Low tissue specificity"/>
</dbReference>
<dbReference type="MalaCards" id="ARPC4"/>
<dbReference type="MIM" id="604226">
    <property type="type" value="gene"/>
</dbReference>
<dbReference type="MIM" id="620141">
    <property type="type" value="phenotype"/>
</dbReference>
<dbReference type="neXtProt" id="NX_P59998"/>
<dbReference type="OpenTargets" id="ENSG00000241553"/>
<dbReference type="Orphanet" id="662762">
    <property type="disease" value="Motor delay-microcephaly-speech impairment-ocular abnormalities syndrome"/>
</dbReference>
<dbReference type="PharmGKB" id="PA25002"/>
<dbReference type="VEuPathDB" id="HostDB:ENSG00000241553"/>
<dbReference type="eggNOG" id="KOG1876">
    <property type="taxonomic scope" value="Eukaryota"/>
</dbReference>
<dbReference type="GeneTree" id="ENSGT00390000016233"/>
<dbReference type="HOGENOM" id="CLU_187809_0_0_1"/>
<dbReference type="InParanoid" id="P59998"/>
<dbReference type="OMA" id="EAYLGEF"/>
<dbReference type="OrthoDB" id="336240at2759"/>
<dbReference type="PAN-GO" id="P59998">
    <property type="GO annotations" value="2 GO annotations based on evolutionary models"/>
</dbReference>
<dbReference type="PhylomeDB" id="P59998"/>
<dbReference type="TreeFam" id="TF105621"/>
<dbReference type="TreeFam" id="TF313087"/>
<dbReference type="PathwayCommons" id="P59998"/>
<dbReference type="Reactome" id="R-HSA-2029482">
    <property type="pathway name" value="Regulation of actin dynamics for phagocytic cup formation"/>
</dbReference>
<dbReference type="Reactome" id="R-HSA-3928662">
    <property type="pathway name" value="EPHB-mediated forward signaling"/>
</dbReference>
<dbReference type="Reactome" id="R-HSA-5663213">
    <property type="pathway name" value="RHO GTPases Activate WASPs and WAVEs"/>
</dbReference>
<dbReference type="Reactome" id="R-HSA-8856828">
    <property type="pathway name" value="Clathrin-mediated endocytosis"/>
</dbReference>
<dbReference type="Reactome" id="R-HSA-9664422">
    <property type="pathway name" value="FCGR3A-mediated phagocytosis"/>
</dbReference>
<dbReference type="SignaLink" id="P59998"/>
<dbReference type="SIGNOR" id="P59998"/>
<dbReference type="BioGRID-ORCS" id="10093">
    <property type="hits" value="637 hits in 1165 CRISPR screens"/>
</dbReference>
<dbReference type="CD-CODE" id="91857CE7">
    <property type="entry name" value="Nucleolus"/>
</dbReference>
<dbReference type="GeneWiki" id="ARPC4"/>
<dbReference type="GenomeRNAi" id="10093"/>
<dbReference type="Pharos" id="P59998">
    <property type="development level" value="Tbio"/>
</dbReference>
<dbReference type="PRO" id="PR:P59998"/>
<dbReference type="Proteomes" id="UP000005640">
    <property type="component" value="Chromosome 3"/>
</dbReference>
<dbReference type="RNAct" id="P59998">
    <property type="molecule type" value="protein"/>
</dbReference>
<dbReference type="Bgee" id="ENSG00000241553">
    <property type="expression patterns" value="Expressed in monocyte and 201 other cell types or tissues"/>
</dbReference>
<dbReference type="ExpressionAtlas" id="P59998">
    <property type="expression patterns" value="baseline and differential"/>
</dbReference>
<dbReference type="GO" id="GO:0005885">
    <property type="term" value="C:Arp2/3 protein complex"/>
    <property type="evidence" value="ECO:0000314"/>
    <property type="project" value="UniProtKB"/>
</dbReference>
<dbReference type="GO" id="GO:0042995">
    <property type="term" value="C:cell projection"/>
    <property type="evidence" value="ECO:0007669"/>
    <property type="project" value="UniProtKB-SubCell"/>
</dbReference>
<dbReference type="GO" id="GO:0005829">
    <property type="term" value="C:cytosol"/>
    <property type="evidence" value="ECO:0000304"/>
    <property type="project" value="Reactome"/>
</dbReference>
<dbReference type="GO" id="GO:0070062">
    <property type="term" value="C:extracellular exosome"/>
    <property type="evidence" value="ECO:0007005"/>
    <property type="project" value="UniProtKB"/>
</dbReference>
<dbReference type="GO" id="GO:0005634">
    <property type="term" value="C:nucleus"/>
    <property type="evidence" value="ECO:0000250"/>
    <property type="project" value="UniProtKB"/>
</dbReference>
<dbReference type="GO" id="GO:0035861">
    <property type="term" value="C:site of double-strand break"/>
    <property type="evidence" value="ECO:0000250"/>
    <property type="project" value="UniProtKB"/>
</dbReference>
<dbReference type="GO" id="GO:0003779">
    <property type="term" value="F:actin binding"/>
    <property type="evidence" value="ECO:0007669"/>
    <property type="project" value="UniProtKB-KW"/>
</dbReference>
<dbReference type="GO" id="GO:0019899">
    <property type="term" value="F:enzyme binding"/>
    <property type="evidence" value="ECO:0000353"/>
    <property type="project" value="BHF-UCL"/>
</dbReference>
<dbReference type="GO" id="GO:0005200">
    <property type="term" value="F:structural constituent of cytoskeleton"/>
    <property type="evidence" value="ECO:0000314"/>
    <property type="project" value="FlyBase"/>
</dbReference>
<dbReference type="GO" id="GO:0030041">
    <property type="term" value="P:actin filament polymerization"/>
    <property type="evidence" value="ECO:0007669"/>
    <property type="project" value="InterPro"/>
</dbReference>
<dbReference type="GO" id="GO:0045010">
    <property type="term" value="P:actin nucleation"/>
    <property type="evidence" value="ECO:0000303"/>
    <property type="project" value="UniProtKB"/>
</dbReference>
<dbReference type="GO" id="GO:0034314">
    <property type="term" value="P:Arp2/3 complex-mediated actin nucleation"/>
    <property type="evidence" value="ECO:0000314"/>
    <property type="project" value="FlyBase"/>
</dbReference>
<dbReference type="FunFam" id="3.30.1460.20:FF:000001">
    <property type="entry name" value="Actin-related protein 2/3 complex subunit 4"/>
    <property type="match status" value="1"/>
</dbReference>
<dbReference type="Gene3D" id="3.30.1460.20">
    <property type="match status" value="1"/>
</dbReference>
<dbReference type="InterPro" id="IPR034666">
    <property type="entry name" value="ARPC2/4"/>
</dbReference>
<dbReference type="InterPro" id="IPR008384">
    <property type="entry name" value="ARPC4"/>
</dbReference>
<dbReference type="PANTHER" id="PTHR22629:SF0">
    <property type="entry name" value="ACTIN-RELATED PROTEIN 2_3 COMPLEX SUBUNIT 4"/>
    <property type="match status" value="1"/>
</dbReference>
<dbReference type="PANTHER" id="PTHR22629">
    <property type="entry name" value="ARP2/3 COMPLEX 20 KD SUBUNIT"/>
    <property type="match status" value="1"/>
</dbReference>
<dbReference type="Pfam" id="PF05856">
    <property type="entry name" value="ARPC4"/>
    <property type="match status" value="1"/>
</dbReference>
<dbReference type="PIRSF" id="PIRSF039100">
    <property type="entry name" value="ARPC4"/>
    <property type="match status" value="1"/>
</dbReference>
<dbReference type="SUPFAM" id="SSF69645">
    <property type="entry name" value="Arp2/3 complex subunits"/>
    <property type="match status" value="1"/>
</dbReference>
<comment type="function">
    <text evidence="3 5">Actin-binding component of the Arp2/3 complex, a multiprotein complex that mediates actin polymerization upon stimulation by nucleation-promoting factor (NPF) (PubMed:9230079). The Arp2/3 complex mediates the formation of branched actin networks in the cytoplasm, providing the force for cell motility (PubMed:9230079). In addition to its role in the cytoplasmic cytoskeleton, the Arp2/3 complex also promotes actin polymerization in the nucleus, thereby regulating gene transcription and repair of damaged DNA (PubMed:29925947). The Arp2/3 complex promotes homologous recombination (HR) repair in response to DNA damage by promoting nuclear actin polymerization, leading to drive motility of double-strand breaks (DSBs) (PubMed:29925947).</text>
</comment>
<comment type="subunit">
    <text evidence="1 5 6">Component of the Arp2/3 complex composed of ACTR2/ARP2, ACTR3/ARP3, ARPC1B/p41-ARC, ARPC2/p34-ARC, ARPC3/p21-ARC, ARPC4/p20-ARC and ARPC5/p16-ARC.</text>
</comment>
<comment type="interaction">
    <interactant intactId="EBI-351872">
        <id>P59998</id>
    </interactant>
    <interactant intactId="EBI-351829">
        <id>O15145</id>
        <label>ARPC3</label>
    </interactant>
    <organismsDiffer>false</organismsDiffer>
    <experiments>6</experiments>
</comment>
<comment type="interaction">
    <interactant intactId="EBI-351872">
        <id>P59998</id>
    </interactant>
    <interactant intactId="EBI-711189">
        <id>Q9BPX5</id>
        <label>ARPC5L</label>
    </interactant>
    <organismsDiffer>false</organismsDiffer>
    <experiments>8</experiments>
</comment>
<comment type="interaction">
    <interactant intactId="EBI-351872">
        <id>P59998</id>
    </interactant>
    <interactant intactId="EBI-8652459">
        <id>Q8WXB1</id>
        <label>METTL21A</label>
    </interactant>
    <organismsDiffer>false</organismsDiffer>
    <experiments>3</experiments>
</comment>
<comment type="interaction">
    <interactant intactId="EBI-351872">
        <id>P59998</id>
    </interactant>
    <interactant intactId="EBI-10171633">
        <id>Q96PV4</id>
        <label>PNMA5</label>
    </interactant>
    <organismsDiffer>false</organismsDiffer>
    <experiments>7</experiments>
</comment>
<comment type="interaction">
    <interactant intactId="EBI-351872">
        <id>P59998</id>
    </interactant>
    <interactant intactId="EBI-957615">
        <id>O00401</id>
        <label>WASL</label>
    </interactant>
    <organismsDiffer>false</organismsDiffer>
    <experiments>3</experiments>
</comment>
<comment type="subcellular location">
    <subcellularLocation>
        <location evidence="6">Cytoplasm</location>
        <location evidence="6">Cytoskeleton</location>
    </subcellularLocation>
    <subcellularLocation>
        <location evidence="6">Cell projection</location>
    </subcellularLocation>
    <subcellularLocation>
        <location evidence="3">Nucleus</location>
    </subcellularLocation>
</comment>
<comment type="alternative products">
    <event type="alternative splicing"/>
    <isoform>
        <id>P59998-1</id>
        <name>1</name>
        <sequence type="displayed"/>
    </isoform>
    <isoform>
        <id>P59998-2</id>
        <name>2</name>
        <sequence type="described" ref="VSP_046151"/>
    </isoform>
    <isoform>
        <id>P59998-3</id>
        <name>3</name>
        <sequence type="described" ref="VSP_046150"/>
    </isoform>
    <isoform>
        <id>P59998-4</id>
        <name>4</name>
        <sequence type="described" ref="VSP_046753"/>
    </isoform>
</comment>
<comment type="disease" evidence="4">
    <disease id="DI-06554">
        <name>Developmental delay, language impairment, and ocular abnormalities</name>
        <acronym>DEVLO</acronym>
        <description>An autosomal dominant disorder characterized by mild motor delay, mildly impaired intellectual development, and significant speech impairment. Most affected individuals have microcephaly and may have mild dysmorphic features. Variable ocular anomalies include strabismus, cataracts, and cortical visual impairment.</description>
        <dbReference type="MIM" id="620141"/>
    </disease>
    <text>The disease is caused by variants affecting the gene represented in this entry.</text>
</comment>
<comment type="similarity">
    <text evidence="9">Belongs to the ARPC4 family.</text>
</comment>
<comment type="sequence caution" evidence="9">
    <conflict type="erroneous initiation">
        <sequence resource="EMBL-CDS" id="AAH12596"/>
    </conflict>
    <text>Truncated N-terminus.</text>
</comment>
<sequence length="168" mass="19667">MTATLRPYLSAVRATLQAALCLENFSSQVVERHNKPEVEVRSSKELLLQPVTISRNEKEKVLIEGSINSVRVSIAVKQADEIEKILCHKFMRFMMMRAENFFILRRKPVEGYDISFLITNFHTEQMYKHKLVDFVIHFMEEIDKEISEMKLSVNARARIVAEEFLKNF</sequence>
<reference key="1">
    <citation type="journal article" date="1997" name="Biochem. J.">
        <title>Mammalian actin-related protein 2/3 complex localizes to regions of lamellipodial protrusion and is composed of evolutionarily conserved proteins.</title>
        <authorList>
            <person name="Machesky L.M."/>
            <person name="Reeves E."/>
            <person name="Wientjes F."/>
            <person name="Mattheyse F.J."/>
            <person name="Grogan A."/>
            <person name="Totty N.F."/>
            <person name="Burlingame A.L."/>
            <person name="Hsuan J.J."/>
            <person name="Segal A.W."/>
        </authorList>
    </citation>
    <scope>NUCLEOTIDE SEQUENCE [MRNA] (ISOFORM 1)</scope>
    <scope>SUBCELLULAR LOCATION</scope>
    <scope>IDENTIFICATION IN THE ARP2/2 COMPLEX</scope>
</reference>
<reference key="2">
    <citation type="journal article" date="1997" name="J. Cell Biol.">
        <title>The human Arp2/3 complex is composed of evolutionarily conserved subunits and is localized to cellular regions of dynamic actin filament assembly.</title>
        <authorList>
            <person name="Welch M.D."/>
            <person name="Depace A.H."/>
            <person name="Verma S."/>
            <person name="Iwamatsu A."/>
            <person name="Mitchison T.J."/>
        </authorList>
    </citation>
    <scope>NUCLEOTIDE SEQUENCE [MRNA] (ISOFORM 1)</scope>
    <scope>IDENTIFICATION IN THE ARP2/2 COMPLEX</scope>
</reference>
<reference key="3">
    <citation type="submission" date="2003-04" db="EMBL/GenBank/DDBJ databases">
        <title>Full-length cDNA libraries and normalization.</title>
        <authorList>
            <person name="Li W.B."/>
            <person name="Gruber C."/>
            <person name="Jessee J."/>
            <person name="Polayes D."/>
        </authorList>
    </citation>
    <scope>NUCLEOTIDE SEQUENCE [LARGE SCALE MRNA] (ISOFORM 3)</scope>
    <source>
        <tissue>Fetal brain</tissue>
    </source>
</reference>
<reference key="4">
    <citation type="journal article" date="2006" name="Nature">
        <title>The DNA sequence, annotation and analysis of human chromosome 3.</title>
        <authorList>
            <person name="Muzny D.M."/>
            <person name="Scherer S.E."/>
            <person name="Kaul R."/>
            <person name="Wang J."/>
            <person name="Yu J."/>
            <person name="Sudbrak R."/>
            <person name="Buhay C.J."/>
            <person name="Chen R."/>
            <person name="Cree A."/>
            <person name="Ding Y."/>
            <person name="Dugan-Rocha S."/>
            <person name="Gill R."/>
            <person name="Gunaratne P."/>
            <person name="Harris R.A."/>
            <person name="Hawes A.C."/>
            <person name="Hernandez J."/>
            <person name="Hodgson A.V."/>
            <person name="Hume J."/>
            <person name="Jackson A."/>
            <person name="Khan Z.M."/>
            <person name="Kovar-Smith C."/>
            <person name="Lewis L.R."/>
            <person name="Lozado R.J."/>
            <person name="Metzker M.L."/>
            <person name="Milosavljevic A."/>
            <person name="Miner G.R."/>
            <person name="Morgan M.B."/>
            <person name="Nazareth L.V."/>
            <person name="Scott G."/>
            <person name="Sodergren E."/>
            <person name="Song X.-Z."/>
            <person name="Steffen D."/>
            <person name="Wei S."/>
            <person name="Wheeler D.A."/>
            <person name="Wright M.W."/>
            <person name="Worley K.C."/>
            <person name="Yuan Y."/>
            <person name="Zhang Z."/>
            <person name="Adams C.Q."/>
            <person name="Ansari-Lari M.A."/>
            <person name="Ayele M."/>
            <person name="Brown M.J."/>
            <person name="Chen G."/>
            <person name="Chen Z."/>
            <person name="Clendenning J."/>
            <person name="Clerc-Blankenburg K.P."/>
            <person name="Chen R."/>
            <person name="Chen Z."/>
            <person name="Davis C."/>
            <person name="Delgado O."/>
            <person name="Dinh H.H."/>
            <person name="Dong W."/>
            <person name="Draper H."/>
            <person name="Ernst S."/>
            <person name="Fu G."/>
            <person name="Gonzalez-Garay M.L."/>
            <person name="Garcia D.K."/>
            <person name="Gillett W."/>
            <person name="Gu J."/>
            <person name="Hao B."/>
            <person name="Haugen E."/>
            <person name="Havlak P."/>
            <person name="He X."/>
            <person name="Hennig S."/>
            <person name="Hu S."/>
            <person name="Huang W."/>
            <person name="Jackson L.R."/>
            <person name="Jacob L.S."/>
            <person name="Kelly S.H."/>
            <person name="Kube M."/>
            <person name="Levy R."/>
            <person name="Li Z."/>
            <person name="Liu B."/>
            <person name="Liu J."/>
            <person name="Liu W."/>
            <person name="Lu J."/>
            <person name="Maheshwari M."/>
            <person name="Nguyen B.-V."/>
            <person name="Okwuonu G.O."/>
            <person name="Palmeiri A."/>
            <person name="Pasternak S."/>
            <person name="Perez L.M."/>
            <person name="Phelps K.A."/>
            <person name="Plopper F.J."/>
            <person name="Qiang B."/>
            <person name="Raymond C."/>
            <person name="Rodriguez R."/>
            <person name="Saenphimmachak C."/>
            <person name="Santibanez J."/>
            <person name="Shen H."/>
            <person name="Shen Y."/>
            <person name="Subramanian S."/>
            <person name="Tabor P.E."/>
            <person name="Verduzco D."/>
            <person name="Waldron L."/>
            <person name="Wang J."/>
            <person name="Wang J."/>
            <person name="Wang Q."/>
            <person name="Williams G.A."/>
            <person name="Wong G.K.-S."/>
            <person name="Yao Z."/>
            <person name="Zhang J."/>
            <person name="Zhang X."/>
            <person name="Zhao G."/>
            <person name="Zhou J."/>
            <person name="Zhou Y."/>
            <person name="Nelson D."/>
            <person name="Lehrach H."/>
            <person name="Reinhardt R."/>
            <person name="Naylor S.L."/>
            <person name="Yang H."/>
            <person name="Olson M."/>
            <person name="Weinstock G."/>
            <person name="Gibbs R.A."/>
        </authorList>
    </citation>
    <scope>NUCLEOTIDE SEQUENCE [LARGE SCALE GENOMIC DNA]</scope>
</reference>
<reference key="5">
    <citation type="journal article" date="2004" name="Genome Res.">
        <title>The status, quality, and expansion of the NIH full-length cDNA project: the Mammalian Gene Collection (MGC).</title>
        <authorList>
            <consortium name="The MGC Project Team"/>
        </authorList>
    </citation>
    <scope>NUCLEOTIDE SEQUENCE [LARGE SCALE MRNA] (ISOFORM 2)</scope>
    <scope>NUCLEOTIDE SEQUENCE [LARGE SCALE MRNA] OF 2-168 (ISOFORM 1)</scope>
    <source>
        <tissue>Choriocarcinoma</tissue>
        <tissue>Prostate</tissue>
    </source>
</reference>
<reference key="6">
    <citation type="journal article" date="2003" name="Nat. Biotechnol.">
        <title>Exploring proteomes and analyzing protein processing by mass spectrometric identification of sorted N-terminal peptides.</title>
        <authorList>
            <person name="Gevaert K."/>
            <person name="Goethals M."/>
            <person name="Martens L."/>
            <person name="Van Damme J."/>
            <person name="Staes A."/>
            <person name="Thomas G.R."/>
            <person name="Vandekerckhove J."/>
        </authorList>
    </citation>
    <scope>PROTEIN SEQUENCE OF 2-13</scope>
    <scope>ACETYLATION AT THR-2</scope>
    <source>
        <tissue>Platelet</tissue>
    </source>
</reference>
<reference key="7">
    <citation type="journal article" date="2001" name="Mol. Cell">
        <title>Reconstitution of human Arp2/3 complex reveals critical roles of individual subunits in complex structure and activity.</title>
        <authorList>
            <person name="Gournier H."/>
            <person name="Goley E.D."/>
            <person name="Niederstrasser H."/>
            <person name="Trinh T."/>
            <person name="Welch M.D."/>
        </authorList>
    </citation>
    <scope>ACTIN-BINDING</scope>
    <scope>RECONSTITUTION OF THE ARP2/3 COMPLEX</scope>
</reference>
<reference key="8">
    <citation type="journal article" date="2018" name="Nature">
        <title>Nuclear ARP2/3 drives DNA break clustering for homology-directed repair.</title>
        <authorList>
            <person name="Schrank B.R."/>
            <person name="Aparicio T."/>
            <person name="Li Y."/>
            <person name="Chang W."/>
            <person name="Chait B.T."/>
            <person name="Gundersen G.G."/>
            <person name="Gottesman M.E."/>
            <person name="Gautier J."/>
        </authorList>
    </citation>
    <scope>FUNCTION</scope>
    <scope>SUBCELLULAR LOCATION</scope>
</reference>
<reference key="9">
    <citation type="journal article" date="2022" name="HGG Adv.">
        <title>A recurrent, de novo pathogenic variant in ARPC4 disrupts actin filament formation and causes microcephaly and speech delay.</title>
        <authorList>
            <person name="Laboy Cintron D."/>
            <person name="Muir A.M."/>
            <person name="Scott A."/>
            <person name="McDonald M."/>
            <person name="Monaghan K.G."/>
            <person name="Santiago-Sim T."/>
            <person name="Wentzensen I.M."/>
            <person name="De Luca C."/>
            <person name="Brancati F."/>
            <person name="Harris D.J."/>
            <person name="Goueli C."/>
            <person name="Stottmann R."/>
            <person name="Prada C.E."/>
            <person name="Biderman Waberski M."/>
            <person name="Mefford H.C."/>
        </authorList>
    </citation>
    <scope>INVOLVEMENT IN DEVLO</scope>
    <scope>VARIANT DEVLO CYS-158</scope>
</reference>
<gene>
    <name type="primary">ARPC4</name>
    <name type="synonym">ARC20</name>
</gene>
<feature type="initiator methionine" description="Removed" evidence="2">
    <location>
        <position position="1"/>
    </location>
</feature>
<feature type="chain" id="PRO_0000124049" description="Actin-related protein 2/3 complex subunit 4">
    <location>
        <begin position="2"/>
        <end position="168"/>
    </location>
</feature>
<feature type="modified residue" description="N-acetylthreonine" evidence="2">
    <location>
        <position position="2"/>
    </location>
</feature>
<feature type="splice variant" id="VSP_046753" description="In isoform 4." evidence="9">
    <location>
        <begin position="1"/>
        <end position="90"/>
    </location>
</feature>
<feature type="splice variant" id="VSP_046150" description="In isoform 3." evidence="8">
    <original>M</original>
    <variation>MVREPGPRPGTPGCSASGQW</variation>
    <location>
        <position position="1"/>
    </location>
</feature>
<feature type="splice variant" id="VSP_046151" description="In isoform 2." evidence="7">
    <original>EGYDISFLITNFHTEQMYKHKLVDFVIHFMEEIDKEISEMKLSVNARARIVAEEFLKNF</original>
    <variation>EQKKIFTIQGCYPVIRCLLRRRGWVEKKMVHRSGPTLLPPQKDLDSSAMGDSDTTEDEDEDEDEEFQPSQLFDFDDLLKFDDLDGTHALMVGLCLNLRNLPWFDEVDANSFFPRCYCLGAEDDKKAFIGDKQPKKQEKNPVLVSPEFVDEALCACEEYLSNLAHMDIDKDLEAPLYLTPEGWSLFLQRYYQVVHEGAELRHLDTQVQRCEDILQQLQAVVPQIDMEGDRNIWIVKPGAKSRGRGIMCMDHLEEMLKLVNGNPVVMKDGKWVVQKYIERPLLIFGTKFDLRQWFLVTDWNPLTVWFYRDSYIRFSTQPFSLKNLDNSVHLCNNSIQKHLENSCHRHPLLPPDNMWSSQRFQAHLQEMGAPNAWSTIIVPGMKDAVIHALQTSQDTVQCRKASFELYGADFVFGEDFQPWLIEINASPTMAPSTAVTARLCAGVQADTLRVVIDRMLDRNCDTGAFELIYKQPVTTSPASTPRPSCLLPMYSDTRARSSDDSTASWWALRPCRPQARP</variation>
    <location>
        <begin position="110"/>
        <end position="168"/>
    </location>
</feature>
<feature type="sequence variant" id="VAR_087805" description="In DEVLO; dbSNP:rs2125650298." evidence="4">
    <original>R</original>
    <variation>C</variation>
    <location>
        <position position="158"/>
    </location>
</feature>
<feature type="sequence conflict" description="In Ref. 5; AAH12596." evidence="9" ref="5">
    <original>M</original>
    <variation>T</variation>
    <location>
        <position position="94"/>
    </location>
</feature>
<evidence type="ECO:0000269" key="1">
    <source>
    </source>
</evidence>
<evidence type="ECO:0000269" key="2">
    <source>
    </source>
</evidence>
<evidence type="ECO:0000269" key="3">
    <source>
    </source>
</evidence>
<evidence type="ECO:0000269" key="4">
    <source>
    </source>
</evidence>
<evidence type="ECO:0000269" key="5">
    <source>
    </source>
</evidence>
<evidence type="ECO:0000269" key="6">
    <source>
    </source>
</evidence>
<evidence type="ECO:0000303" key="7">
    <source>
    </source>
</evidence>
<evidence type="ECO:0000303" key="8">
    <source ref="3"/>
</evidence>
<evidence type="ECO:0000305" key="9"/>
<protein>
    <recommendedName>
        <fullName>Actin-related protein 2/3 complex subunit 4</fullName>
    </recommendedName>
    <alternativeName>
        <fullName>Arp2/3 complex 20 kDa subunit</fullName>
        <shortName>p20-ARC</shortName>
    </alternativeName>
</protein>
<name>ARPC4_HUMAN</name>
<proteinExistence type="evidence at protein level"/>
<organism>
    <name type="scientific">Homo sapiens</name>
    <name type="common">Human</name>
    <dbReference type="NCBI Taxonomy" id="9606"/>
    <lineage>
        <taxon>Eukaryota</taxon>
        <taxon>Metazoa</taxon>
        <taxon>Chordata</taxon>
        <taxon>Craniata</taxon>
        <taxon>Vertebrata</taxon>
        <taxon>Euteleostomi</taxon>
        <taxon>Mammalia</taxon>
        <taxon>Eutheria</taxon>
        <taxon>Euarchontoglires</taxon>
        <taxon>Primates</taxon>
        <taxon>Haplorrhini</taxon>
        <taxon>Catarrhini</taxon>
        <taxon>Hominidae</taxon>
        <taxon>Homo</taxon>
    </lineage>
</organism>
<accession>P59998</accession>
<accession>C9JWM7</accession>
<accession>E7ETI0</accession>
<accession>F6TTL5</accession>
<accession>O15509</accession>
<accession>Q6P0W5</accession>
<accession>Q96QJ3</accession>